<comment type="catalytic activity">
    <reaction>
        <text>(2R)-3-phosphoglycerate + ATP = (2R)-3-phospho-glyceroyl phosphate + ADP</text>
        <dbReference type="Rhea" id="RHEA:14801"/>
        <dbReference type="ChEBI" id="CHEBI:30616"/>
        <dbReference type="ChEBI" id="CHEBI:57604"/>
        <dbReference type="ChEBI" id="CHEBI:58272"/>
        <dbReference type="ChEBI" id="CHEBI:456216"/>
        <dbReference type="EC" id="2.7.2.3"/>
    </reaction>
</comment>
<comment type="pathway">
    <text>Carbohydrate degradation; glycolysis; pyruvate from D-glyceraldehyde 3-phosphate: step 2/5.</text>
</comment>
<comment type="subunit">
    <text evidence="1">Monomer.</text>
</comment>
<comment type="subcellular location">
    <subcellularLocation>
        <location>Cytoplasm</location>
    </subcellularLocation>
</comment>
<comment type="similarity">
    <text evidence="3">Belongs to the phosphoglycerate kinase family.</text>
</comment>
<gene>
    <name type="primary">pgk</name>
    <name type="ordered locus">M6_Spy1610</name>
</gene>
<sequence length="398" mass="42130">MAKLTVKDVDLKGKKVLVRVDFNVPLKDGVITNDNRITAALPTIKYIIEQGGRAILFSHLGRVKEEADKEGKSLAPVAADLAAKLGQDVVFPGVTRGSKLEEAINALEDGQVLLVENTRFEDVDGKKESKNDEELGKYWASLGDGIFVNDAFGTAHRAHASNVGISANVEKAVAGFLLENEIAYIQEAVETPERPFVAILGGSKVSDKIGVIENLLEKADKVLIGGGMTYTFYKAQGIEIGNSLVEEDKLDVAKDLLEKSNGKLILPVDSKEANAFAGYTEVRDTEGEAVSEGFLGLDIGPKSIAEFDQALTGAKTVVWNGPMGVFENPDFQAGTIGVMDAIVKQPGVKSIIGGGDSAAAAINLGRADKFSWISTGGGASMELLEGKVLPGLAALTEK</sequence>
<reference key="1">
    <citation type="journal article" date="2004" name="J. Infect. Dis.">
        <title>Progress toward characterization of the group A Streptococcus metagenome: complete genome sequence of a macrolide-resistant serotype M6 strain.</title>
        <authorList>
            <person name="Banks D.J."/>
            <person name="Porcella S.F."/>
            <person name="Barbian K.D."/>
            <person name="Beres S.B."/>
            <person name="Philips L.E."/>
            <person name="Voyich J.M."/>
            <person name="DeLeo F.R."/>
            <person name="Martin J.M."/>
            <person name="Somerville G.A."/>
            <person name="Musser J.M."/>
        </authorList>
    </citation>
    <scope>NUCLEOTIDE SEQUENCE [LARGE SCALE GENOMIC DNA]</scope>
    <source>
        <strain>ATCC BAA-946 / MGAS10394</strain>
    </source>
</reference>
<reference key="2">
    <citation type="submission" date="2000-05" db="UniProtKB">
        <title>Two-dimensional gel electrophoresis map of Streptococcus pyogenes proteins.</title>
        <authorList>
            <person name="Hogan D.A."/>
            <person name="Du P."/>
            <person name="Stevenson T.I."/>
            <person name="Whitton M."/>
            <person name="Kilby G.W."/>
            <person name="Rogers J."/>
            <person name="VanBogelen R.A."/>
        </authorList>
    </citation>
    <scope>PROTEIN SEQUENCE OF 2-12; 205-218; 235-255; 285-315; 350-366 AND 388-398</scope>
    <scope>IDENTIFICATION BY MASS SPECTROMETRY</scope>
    <source>
        <strain>JRS4 / Serotype M6</strain>
    </source>
</reference>
<organism>
    <name type="scientific">Streptococcus pyogenes serotype M6 (strain ATCC BAA-946 / MGAS10394)</name>
    <dbReference type="NCBI Taxonomy" id="286636"/>
    <lineage>
        <taxon>Bacteria</taxon>
        <taxon>Bacillati</taxon>
        <taxon>Bacillota</taxon>
        <taxon>Bacilli</taxon>
        <taxon>Lactobacillales</taxon>
        <taxon>Streptococcaceae</taxon>
        <taxon>Streptococcus</taxon>
    </lineage>
</organism>
<feature type="initiator methionine" description="Removed" evidence="2">
    <location>
        <position position="1"/>
    </location>
</feature>
<feature type="chain" id="PRO_0000146019" description="Phosphoglycerate kinase">
    <location>
        <begin position="2"/>
        <end position="398"/>
    </location>
</feature>
<feature type="binding site" evidence="1">
    <location>
        <begin position="21"/>
        <end position="23"/>
    </location>
    <ligand>
        <name>substrate</name>
    </ligand>
</feature>
<feature type="binding site" evidence="1">
    <location>
        <position position="36"/>
    </location>
    <ligand>
        <name>substrate</name>
    </ligand>
</feature>
<feature type="binding site" evidence="1">
    <location>
        <begin position="59"/>
        <end position="62"/>
    </location>
    <ligand>
        <name>substrate</name>
    </ligand>
</feature>
<feature type="binding site" evidence="1">
    <location>
        <position position="119"/>
    </location>
    <ligand>
        <name>substrate</name>
    </ligand>
</feature>
<feature type="binding site" evidence="1">
    <location>
        <position position="157"/>
    </location>
    <ligand>
        <name>substrate</name>
    </ligand>
</feature>
<feature type="binding site" evidence="1">
    <location>
        <position position="208"/>
    </location>
    <ligand>
        <name>ATP</name>
        <dbReference type="ChEBI" id="CHEBI:30616"/>
    </ligand>
</feature>
<feature type="binding site" evidence="1">
    <location>
        <position position="296"/>
    </location>
    <ligand>
        <name>ATP</name>
        <dbReference type="ChEBI" id="CHEBI:30616"/>
    </ligand>
</feature>
<feature type="binding site" evidence="1">
    <location>
        <position position="327"/>
    </location>
    <ligand>
        <name>ATP</name>
        <dbReference type="ChEBI" id="CHEBI:30616"/>
    </ligand>
</feature>
<feature type="binding site" evidence="1">
    <location>
        <begin position="354"/>
        <end position="357"/>
    </location>
    <ligand>
        <name>ATP</name>
        <dbReference type="ChEBI" id="CHEBI:30616"/>
    </ligand>
</feature>
<dbReference type="EC" id="2.7.2.3"/>
<dbReference type="EMBL" id="CP000003">
    <property type="protein sequence ID" value="AAT87745.1"/>
    <property type="molecule type" value="Genomic_DNA"/>
</dbReference>
<dbReference type="RefSeq" id="WP_002982888.1">
    <property type="nucleotide sequence ID" value="NC_006086.1"/>
</dbReference>
<dbReference type="SMR" id="Q5XA18"/>
<dbReference type="KEGG" id="spa:M6_Spy1610"/>
<dbReference type="HOGENOM" id="CLU_025427_0_1_9"/>
<dbReference type="UniPathway" id="UPA00109">
    <property type="reaction ID" value="UER00185"/>
</dbReference>
<dbReference type="Proteomes" id="UP000001167">
    <property type="component" value="Chromosome"/>
</dbReference>
<dbReference type="GO" id="GO:0005829">
    <property type="term" value="C:cytosol"/>
    <property type="evidence" value="ECO:0007669"/>
    <property type="project" value="TreeGrafter"/>
</dbReference>
<dbReference type="GO" id="GO:0043531">
    <property type="term" value="F:ADP binding"/>
    <property type="evidence" value="ECO:0007669"/>
    <property type="project" value="TreeGrafter"/>
</dbReference>
<dbReference type="GO" id="GO:0005524">
    <property type="term" value="F:ATP binding"/>
    <property type="evidence" value="ECO:0007669"/>
    <property type="project" value="UniProtKB-KW"/>
</dbReference>
<dbReference type="GO" id="GO:0004618">
    <property type="term" value="F:phosphoglycerate kinase activity"/>
    <property type="evidence" value="ECO:0007669"/>
    <property type="project" value="UniProtKB-UniRule"/>
</dbReference>
<dbReference type="GO" id="GO:0006094">
    <property type="term" value="P:gluconeogenesis"/>
    <property type="evidence" value="ECO:0007669"/>
    <property type="project" value="TreeGrafter"/>
</dbReference>
<dbReference type="GO" id="GO:0006096">
    <property type="term" value="P:glycolytic process"/>
    <property type="evidence" value="ECO:0007669"/>
    <property type="project" value="UniProtKB-UniRule"/>
</dbReference>
<dbReference type="FunFam" id="3.40.50.1260:FF:000001">
    <property type="entry name" value="Phosphoglycerate kinase"/>
    <property type="match status" value="1"/>
</dbReference>
<dbReference type="FunFam" id="3.40.50.1260:FF:000008">
    <property type="entry name" value="Phosphoglycerate kinase"/>
    <property type="match status" value="1"/>
</dbReference>
<dbReference type="Gene3D" id="3.40.50.1260">
    <property type="entry name" value="Phosphoglycerate kinase, N-terminal domain"/>
    <property type="match status" value="2"/>
</dbReference>
<dbReference type="HAMAP" id="MF_00145">
    <property type="entry name" value="Phosphoglyc_kinase"/>
    <property type="match status" value="1"/>
</dbReference>
<dbReference type="InterPro" id="IPR001576">
    <property type="entry name" value="Phosphoglycerate_kinase"/>
</dbReference>
<dbReference type="InterPro" id="IPR015911">
    <property type="entry name" value="Phosphoglycerate_kinase_CS"/>
</dbReference>
<dbReference type="InterPro" id="IPR015824">
    <property type="entry name" value="Phosphoglycerate_kinase_N"/>
</dbReference>
<dbReference type="InterPro" id="IPR036043">
    <property type="entry name" value="Phosphoglycerate_kinase_sf"/>
</dbReference>
<dbReference type="PANTHER" id="PTHR11406">
    <property type="entry name" value="PHOSPHOGLYCERATE KINASE"/>
    <property type="match status" value="1"/>
</dbReference>
<dbReference type="PANTHER" id="PTHR11406:SF23">
    <property type="entry name" value="PHOSPHOGLYCERATE KINASE 1, CHLOROPLASTIC-RELATED"/>
    <property type="match status" value="1"/>
</dbReference>
<dbReference type="Pfam" id="PF00162">
    <property type="entry name" value="PGK"/>
    <property type="match status" value="1"/>
</dbReference>
<dbReference type="PIRSF" id="PIRSF000724">
    <property type="entry name" value="Pgk"/>
    <property type="match status" value="1"/>
</dbReference>
<dbReference type="PRINTS" id="PR00477">
    <property type="entry name" value="PHGLYCKINASE"/>
</dbReference>
<dbReference type="SUPFAM" id="SSF53748">
    <property type="entry name" value="Phosphoglycerate kinase"/>
    <property type="match status" value="1"/>
</dbReference>
<dbReference type="PROSITE" id="PS00111">
    <property type="entry name" value="PGLYCERATE_KINASE"/>
    <property type="match status" value="1"/>
</dbReference>
<proteinExistence type="evidence at protein level"/>
<name>PGK_STRP6</name>
<keyword id="KW-0067">ATP-binding</keyword>
<keyword id="KW-0963">Cytoplasm</keyword>
<keyword id="KW-0903">Direct protein sequencing</keyword>
<keyword id="KW-0324">Glycolysis</keyword>
<keyword id="KW-0418">Kinase</keyword>
<keyword id="KW-0547">Nucleotide-binding</keyword>
<keyword id="KW-0808">Transferase</keyword>
<evidence type="ECO:0000250" key="1"/>
<evidence type="ECO:0000269" key="2">
    <source ref="2"/>
</evidence>
<evidence type="ECO:0000305" key="3"/>
<accession>Q5XA18</accession>
<accession>P82487</accession>
<protein>
    <recommendedName>
        <fullName>Phosphoglycerate kinase</fullName>
        <ecNumber>2.7.2.3</ecNumber>
    </recommendedName>
</protein>